<keyword id="KW-0007">Acetylation</keyword>
<keyword id="KW-0963">Cytoplasm</keyword>
<keyword id="KW-0539">Nucleus</keyword>
<keyword id="KW-1185">Reference proteome</keyword>
<dbReference type="EMBL" id="M31042">
    <property type="protein sequence ID" value="AAA40059.1"/>
    <property type="molecule type" value="mRNA"/>
</dbReference>
<dbReference type="EMBL" id="M59821">
    <property type="protein sequence ID" value="AAA39931.1"/>
    <property type="molecule type" value="mRNA"/>
</dbReference>
<dbReference type="EMBL" id="L26490">
    <property type="protein sequence ID" value="AAB00120.1"/>
    <property type="molecule type" value="Genomic_DNA"/>
</dbReference>
<dbReference type="EMBL" id="AK032692">
    <property type="protein sequence ID" value="BAC27990.1"/>
    <property type="molecule type" value="mRNA"/>
</dbReference>
<dbReference type="EMBL" id="AK144601">
    <property type="protein sequence ID" value="BAE25960.1"/>
    <property type="molecule type" value="mRNA"/>
</dbReference>
<dbReference type="EMBL" id="AK170433">
    <property type="protein sequence ID" value="BAE41793.1"/>
    <property type="molecule type" value="mRNA"/>
</dbReference>
<dbReference type="EMBL" id="AC145556">
    <property type="status" value="NOT_ANNOTATED_CDS"/>
    <property type="molecule type" value="Genomic_DNA"/>
</dbReference>
<dbReference type="EMBL" id="BC002067">
    <property type="protein sequence ID" value="AAH02067.1"/>
    <property type="molecule type" value="mRNA"/>
</dbReference>
<dbReference type="CCDS" id="CCDS22474.1"/>
<dbReference type="PIR" id="A54722">
    <property type="entry name" value="A36370"/>
</dbReference>
<dbReference type="RefSeq" id="NP_034629.3">
    <property type="nucleotide sequence ID" value="NM_010499.4"/>
</dbReference>
<dbReference type="SMR" id="P17950"/>
<dbReference type="FunCoup" id="P17950">
    <property type="interactions" value="1725"/>
</dbReference>
<dbReference type="STRING" id="10090.ENSMUSP00000060275"/>
<dbReference type="GlyGen" id="P17950">
    <property type="glycosylation" value="1 site"/>
</dbReference>
<dbReference type="iPTMnet" id="P17950"/>
<dbReference type="PhosphoSitePlus" id="P17950"/>
<dbReference type="PaxDb" id="10090-ENSMUSP00000060275"/>
<dbReference type="ProteomicsDB" id="267090"/>
<dbReference type="Antibodypedia" id="13536">
    <property type="antibodies" value="116 antibodies from 21 providers"/>
</dbReference>
<dbReference type="Ensembl" id="ENSMUST00000060427.6">
    <property type="protein sequence ID" value="ENSMUSP00000060275.5"/>
    <property type="gene ID" value="ENSMUSG00000053560.6"/>
</dbReference>
<dbReference type="GeneID" id="15936"/>
<dbReference type="KEGG" id="mmu:15936"/>
<dbReference type="UCSC" id="uc009mmr.2">
    <property type="organism name" value="mouse"/>
</dbReference>
<dbReference type="AGR" id="MGI:104815"/>
<dbReference type="CTD" id="9592"/>
<dbReference type="MGI" id="MGI:104815">
    <property type="gene designation" value="Ier2"/>
</dbReference>
<dbReference type="VEuPathDB" id="HostDB:ENSMUSG00000053560"/>
<dbReference type="eggNOG" id="ENOG502S19F">
    <property type="taxonomic scope" value="Eukaryota"/>
</dbReference>
<dbReference type="GeneTree" id="ENSGT00900000141021"/>
<dbReference type="HOGENOM" id="CLU_1234685_0_0_1"/>
<dbReference type="InParanoid" id="P17950"/>
<dbReference type="OMA" id="MVMRSAR"/>
<dbReference type="OrthoDB" id="8937180at2759"/>
<dbReference type="PhylomeDB" id="P17950"/>
<dbReference type="TreeFam" id="TF331376"/>
<dbReference type="BioGRID-ORCS" id="15936">
    <property type="hits" value="9 hits in 77 CRISPR screens"/>
</dbReference>
<dbReference type="ChiTaRS" id="Ier2">
    <property type="organism name" value="mouse"/>
</dbReference>
<dbReference type="PRO" id="PR:P17950"/>
<dbReference type="Proteomes" id="UP000000589">
    <property type="component" value="Chromosome 8"/>
</dbReference>
<dbReference type="RNAct" id="P17950">
    <property type="molecule type" value="protein"/>
</dbReference>
<dbReference type="Bgee" id="ENSMUSG00000053560">
    <property type="expression patterns" value="Expressed in granulocyte and 234 other cell types or tissues"/>
</dbReference>
<dbReference type="GO" id="GO:0005737">
    <property type="term" value="C:cytoplasm"/>
    <property type="evidence" value="ECO:0000314"/>
    <property type="project" value="MGI"/>
</dbReference>
<dbReference type="GO" id="GO:0005654">
    <property type="term" value="C:nucleoplasm"/>
    <property type="evidence" value="ECO:0007669"/>
    <property type="project" value="Ensembl"/>
</dbReference>
<dbReference type="GO" id="GO:0005634">
    <property type="term" value="C:nucleus"/>
    <property type="evidence" value="ECO:0000250"/>
    <property type="project" value="UniProtKB"/>
</dbReference>
<dbReference type="GO" id="GO:0048870">
    <property type="term" value="P:cell motility"/>
    <property type="evidence" value="ECO:0000250"/>
    <property type="project" value="UniProtKB"/>
</dbReference>
<dbReference type="GO" id="GO:0030182">
    <property type="term" value="P:neuron differentiation"/>
    <property type="evidence" value="ECO:0000250"/>
    <property type="project" value="UniProtKB"/>
</dbReference>
<dbReference type="GO" id="GO:0045944">
    <property type="term" value="P:positive regulation of transcription by RNA polymerase II"/>
    <property type="evidence" value="ECO:0007669"/>
    <property type="project" value="Ensembl"/>
</dbReference>
<dbReference type="GO" id="GO:0071774">
    <property type="term" value="P:response to fibroblast growth factor"/>
    <property type="evidence" value="ECO:0000250"/>
    <property type="project" value="UniProtKB"/>
</dbReference>
<dbReference type="InterPro" id="IPR008653">
    <property type="entry name" value="IER"/>
</dbReference>
<dbReference type="PANTHER" id="PTHR15895">
    <property type="entry name" value="IMMEDIATE EARLY RESPONSE GENE"/>
    <property type="match status" value="1"/>
</dbReference>
<dbReference type="Pfam" id="PF05760">
    <property type="entry name" value="IER"/>
    <property type="match status" value="1"/>
</dbReference>
<feature type="chain" id="PRO_0000190436" description="Immediate early response gene 2 protein">
    <location>
        <begin position="1"/>
        <end position="221"/>
    </location>
</feature>
<feature type="region of interest" description="Disordered" evidence="4">
    <location>
        <begin position="105"/>
        <end position="155"/>
    </location>
</feature>
<feature type="compositionally biased region" description="Low complexity" evidence="4">
    <location>
        <begin position="125"/>
        <end position="136"/>
    </location>
</feature>
<feature type="modified residue" description="N-acetylmethionine" evidence="3">
    <location>
        <position position="1"/>
    </location>
</feature>
<feature type="sequence conflict" description="In Ref. 1; AAA40059." evidence="7" ref="1">
    <original>G</original>
    <variation>D</variation>
    <location>
        <position position="27"/>
    </location>
</feature>
<feature type="sequence conflict" description="In Ref. 1; AAA40059, 2; AAA39931 and 3; AAB00120." evidence="7" ref="1 2 3">
    <original>V</original>
    <variation>L</variation>
    <location>
        <position position="46"/>
    </location>
</feature>
<feature type="sequence conflict" description="In Ref. 1; AAA40059." evidence="7" ref="1">
    <original>F</original>
    <variation>S</variation>
    <location>
        <position position="59"/>
    </location>
</feature>
<feature type="sequence conflict" description="In Ref. 4; BAC27990." evidence="7" ref="4">
    <original>A</original>
    <variation>D</variation>
    <location>
        <position position="76"/>
    </location>
</feature>
<feature type="sequence conflict" description="In Ref. 4; BAC27990." evidence="7" ref="4">
    <original>E</original>
    <variation>G</variation>
    <location>
        <position position="92"/>
    </location>
</feature>
<feature type="sequence conflict" description="In Ref. 1; AAA40059, 2; AAA39931 and 3; AAB00120." evidence="7" ref="1 2 3">
    <original>G</original>
    <variation>S</variation>
    <location>
        <position position="130"/>
    </location>
</feature>
<feature type="sequence conflict" description="In Ref. 4; BAC27990." evidence="7" ref="4">
    <original>L</original>
    <variation>F</variation>
    <location>
        <position position="183"/>
    </location>
</feature>
<comment type="function">
    <text evidence="1 2 3">DNA-binding protein that seems to act as a transcription factor (By similarity). Involved in the regulation of neuronal differentiation, acts upon JNK-signaling pathway activation and plays a role in neurite outgrowth in hippocampal cells (By similarity). May mediate with FIBP FGF-signaling in the establishment of laterality in the embryo (By similarity). Promotes cell motility, seems to stimulate tumor metastasis (By similarity).</text>
</comment>
<comment type="subcellular location">
    <subcellularLocation>
        <location evidence="3">Cytoplasm</location>
    </subcellularLocation>
    <subcellularLocation>
        <location evidence="3">Nucleus</location>
    </subcellularLocation>
    <text evidence="3">Cytoplasmic during quiescence, translocates to the nucleus upon stimulation.</text>
</comment>
<comment type="induction">
    <text evidence="5 6">By growth factors and cycloheximide.</text>
</comment>
<comment type="similarity">
    <text evidence="7">Belongs to the IER family.</text>
</comment>
<accession>P17950</accession>
<accession>Q3TD12</accession>
<accession>Q64251</accession>
<accession>Q8BME8</accession>
<accession>Q99M25</accession>
<gene>
    <name type="primary">Ier2</name>
</gene>
<sequence length="221" mass="24459">MEVQKEAQRIMTLSVWKMYHSRMQRGGLRLHRSLQLSLVMRSAREVYLSAKVEAHQPEFPPSRRALDPRLHPPREAEVAVEVASPEAVQPPEPMDTQEEVLRVQETPALCDPPPARVSRKRRSSSDLSDGSDAGLVPSKKARLEEVEGEATSEVPDRLQLPPAQSEGAFPNLARVLQRRFSSLLNCGPAVPPPTPPTCEAKPACRPADNMLNVLVRAVVAF</sequence>
<proteinExistence type="evidence at transcript level"/>
<reference key="1">
    <citation type="journal article" date="1990" name="Proc. Natl. Acad. Sci. U.S.A.">
        <title>Regulation of mRNA abundance in activated T lymphocytes: identification of mRNA species affected by the inhibition of protein synthesis.</title>
        <authorList>
            <person name="Coleclough C."/>
            <person name="Kuhn L."/>
            <person name="Lefkovits I."/>
        </authorList>
    </citation>
    <scope>NUCLEOTIDE SEQUENCE [MRNA]</scope>
    <scope>INDUCTION</scope>
</reference>
<reference key="2">
    <citation type="journal article" date="1990" name="Mol. Cell. Biol.">
        <title>Pip92: a short-lived, growth factor-inducible protein in BALB/c 3T3 and PC12 cells.</title>
        <authorList>
            <person name="Charles C.H."/>
            <person name="Simske J.S."/>
            <person name="O'Brien T.P."/>
            <person name="Lau L.F."/>
        </authorList>
    </citation>
    <scope>NUCLEOTIDE SEQUENCE [MRNA]</scope>
    <scope>INDUCTION</scope>
    <source>
        <strain>BALB/cJ</strain>
    </source>
</reference>
<reference key="3">
    <citation type="journal article" date="1994" name="J. Biol. Chem.">
        <title>Transcriptional activation of the immediate early gene pip92 by serum growth factors requires both Ets and CArG-like elements.</title>
        <authorList>
            <person name="Latinkic B.V."/>
            <person name="Lau L.F."/>
        </authorList>
    </citation>
    <scope>NUCLEOTIDE SEQUENCE [GENOMIC DNA]</scope>
    <source>
        <strain>BALB/cJ</strain>
    </source>
</reference>
<reference key="4">
    <citation type="journal article" date="2005" name="Science">
        <title>The transcriptional landscape of the mammalian genome.</title>
        <authorList>
            <person name="Carninci P."/>
            <person name="Kasukawa T."/>
            <person name="Katayama S."/>
            <person name="Gough J."/>
            <person name="Frith M.C."/>
            <person name="Maeda N."/>
            <person name="Oyama R."/>
            <person name="Ravasi T."/>
            <person name="Lenhard B."/>
            <person name="Wells C."/>
            <person name="Kodzius R."/>
            <person name="Shimokawa K."/>
            <person name="Bajic V.B."/>
            <person name="Brenner S.E."/>
            <person name="Batalov S."/>
            <person name="Forrest A.R."/>
            <person name="Zavolan M."/>
            <person name="Davis M.J."/>
            <person name="Wilming L.G."/>
            <person name="Aidinis V."/>
            <person name="Allen J.E."/>
            <person name="Ambesi-Impiombato A."/>
            <person name="Apweiler R."/>
            <person name="Aturaliya R.N."/>
            <person name="Bailey T.L."/>
            <person name="Bansal M."/>
            <person name="Baxter L."/>
            <person name="Beisel K.W."/>
            <person name="Bersano T."/>
            <person name="Bono H."/>
            <person name="Chalk A.M."/>
            <person name="Chiu K.P."/>
            <person name="Choudhary V."/>
            <person name="Christoffels A."/>
            <person name="Clutterbuck D.R."/>
            <person name="Crowe M.L."/>
            <person name="Dalla E."/>
            <person name="Dalrymple B.P."/>
            <person name="de Bono B."/>
            <person name="Della Gatta G."/>
            <person name="di Bernardo D."/>
            <person name="Down T."/>
            <person name="Engstrom P."/>
            <person name="Fagiolini M."/>
            <person name="Faulkner G."/>
            <person name="Fletcher C.F."/>
            <person name="Fukushima T."/>
            <person name="Furuno M."/>
            <person name="Futaki S."/>
            <person name="Gariboldi M."/>
            <person name="Georgii-Hemming P."/>
            <person name="Gingeras T.R."/>
            <person name="Gojobori T."/>
            <person name="Green R.E."/>
            <person name="Gustincich S."/>
            <person name="Harbers M."/>
            <person name="Hayashi Y."/>
            <person name="Hensch T.K."/>
            <person name="Hirokawa N."/>
            <person name="Hill D."/>
            <person name="Huminiecki L."/>
            <person name="Iacono M."/>
            <person name="Ikeo K."/>
            <person name="Iwama A."/>
            <person name="Ishikawa T."/>
            <person name="Jakt M."/>
            <person name="Kanapin A."/>
            <person name="Katoh M."/>
            <person name="Kawasawa Y."/>
            <person name="Kelso J."/>
            <person name="Kitamura H."/>
            <person name="Kitano H."/>
            <person name="Kollias G."/>
            <person name="Krishnan S.P."/>
            <person name="Kruger A."/>
            <person name="Kummerfeld S.K."/>
            <person name="Kurochkin I.V."/>
            <person name="Lareau L.F."/>
            <person name="Lazarevic D."/>
            <person name="Lipovich L."/>
            <person name="Liu J."/>
            <person name="Liuni S."/>
            <person name="McWilliam S."/>
            <person name="Madan Babu M."/>
            <person name="Madera M."/>
            <person name="Marchionni L."/>
            <person name="Matsuda H."/>
            <person name="Matsuzawa S."/>
            <person name="Miki H."/>
            <person name="Mignone F."/>
            <person name="Miyake S."/>
            <person name="Morris K."/>
            <person name="Mottagui-Tabar S."/>
            <person name="Mulder N."/>
            <person name="Nakano N."/>
            <person name="Nakauchi H."/>
            <person name="Ng P."/>
            <person name="Nilsson R."/>
            <person name="Nishiguchi S."/>
            <person name="Nishikawa S."/>
            <person name="Nori F."/>
            <person name="Ohara O."/>
            <person name="Okazaki Y."/>
            <person name="Orlando V."/>
            <person name="Pang K.C."/>
            <person name="Pavan W.J."/>
            <person name="Pavesi G."/>
            <person name="Pesole G."/>
            <person name="Petrovsky N."/>
            <person name="Piazza S."/>
            <person name="Reed J."/>
            <person name="Reid J.F."/>
            <person name="Ring B.Z."/>
            <person name="Ringwald M."/>
            <person name="Rost B."/>
            <person name="Ruan Y."/>
            <person name="Salzberg S.L."/>
            <person name="Sandelin A."/>
            <person name="Schneider C."/>
            <person name="Schoenbach C."/>
            <person name="Sekiguchi K."/>
            <person name="Semple C.A."/>
            <person name="Seno S."/>
            <person name="Sessa L."/>
            <person name="Sheng Y."/>
            <person name="Shibata Y."/>
            <person name="Shimada H."/>
            <person name="Shimada K."/>
            <person name="Silva D."/>
            <person name="Sinclair B."/>
            <person name="Sperling S."/>
            <person name="Stupka E."/>
            <person name="Sugiura K."/>
            <person name="Sultana R."/>
            <person name="Takenaka Y."/>
            <person name="Taki K."/>
            <person name="Tammoja K."/>
            <person name="Tan S.L."/>
            <person name="Tang S."/>
            <person name="Taylor M.S."/>
            <person name="Tegner J."/>
            <person name="Teichmann S.A."/>
            <person name="Ueda H.R."/>
            <person name="van Nimwegen E."/>
            <person name="Verardo R."/>
            <person name="Wei C.L."/>
            <person name="Yagi K."/>
            <person name="Yamanishi H."/>
            <person name="Zabarovsky E."/>
            <person name="Zhu S."/>
            <person name="Zimmer A."/>
            <person name="Hide W."/>
            <person name="Bult C."/>
            <person name="Grimmond S.M."/>
            <person name="Teasdale R.D."/>
            <person name="Liu E.T."/>
            <person name="Brusic V."/>
            <person name="Quackenbush J."/>
            <person name="Wahlestedt C."/>
            <person name="Mattick J.S."/>
            <person name="Hume D.A."/>
            <person name="Kai C."/>
            <person name="Sasaki D."/>
            <person name="Tomaru Y."/>
            <person name="Fukuda S."/>
            <person name="Kanamori-Katayama M."/>
            <person name="Suzuki M."/>
            <person name="Aoki J."/>
            <person name="Arakawa T."/>
            <person name="Iida J."/>
            <person name="Imamura K."/>
            <person name="Itoh M."/>
            <person name="Kato T."/>
            <person name="Kawaji H."/>
            <person name="Kawagashira N."/>
            <person name="Kawashima T."/>
            <person name="Kojima M."/>
            <person name="Kondo S."/>
            <person name="Konno H."/>
            <person name="Nakano K."/>
            <person name="Ninomiya N."/>
            <person name="Nishio T."/>
            <person name="Okada M."/>
            <person name="Plessy C."/>
            <person name="Shibata K."/>
            <person name="Shiraki T."/>
            <person name="Suzuki S."/>
            <person name="Tagami M."/>
            <person name="Waki K."/>
            <person name="Watahiki A."/>
            <person name="Okamura-Oho Y."/>
            <person name="Suzuki H."/>
            <person name="Kawai J."/>
            <person name="Hayashizaki Y."/>
        </authorList>
    </citation>
    <scope>NUCLEOTIDE SEQUENCE [LARGE SCALE MRNA]</scope>
    <source>
        <strain>C57BL/6J</strain>
        <strain>NOD</strain>
        <tissue>Lung</tissue>
        <tissue>Wolffian duct</tissue>
    </source>
</reference>
<reference key="5">
    <citation type="journal article" date="2009" name="PLoS Biol.">
        <title>Lineage-specific biology revealed by a finished genome assembly of the mouse.</title>
        <authorList>
            <person name="Church D.M."/>
            <person name="Goodstadt L."/>
            <person name="Hillier L.W."/>
            <person name="Zody M.C."/>
            <person name="Goldstein S."/>
            <person name="She X."/>
            <person name="Bult C.J."/>
            <person name="Agarwala R."/>
            <person name="Cherry J.L."/>
            <person name="DiCuccio M."/>
            <person name="Hlavina W."/>
            <person name="Kapustin Y."/>
            <person name="Meric P."/>
            <person name="Maglott D."/>
            <person name="Birtle Z."/>
            <person name="Marques A.C."/>
            <person name="Graves T."/>
            <person name="Zhou S."/>
            <person name="Teague B."/>
            <person name="Potamousis K."/>
            <person name="Churas C."/>
            <person name="Place M."/>
            <person name="Herschleb J."/>
            <person name="Runnheim R."/>
            <person name="Forrest D."/>
            <person name="Amos-Landgraf J."/>
            <person name="Schwartz D.C."/>
            <person name="Cheng Z."/>
            <person name="Lindblad-Toh K."/>
            <person name="Eichler E.E."/>
            <person name="Ponting C.P."/>
        </authorList>
    </citation>
    <scope>NUCLEOTIDE SEQUENCE [LARGE SCALE GENOMIC DNA]</scope>
    <source>
        <strain>C57BL/6J</strain>
    </source>
</reference>
<reference key="6">
    <citation type="journal article" date="2004" name="Genome Res.">
        <title>The status, quality, and expansion of the NIH full-length cDNA project: the Mammalian Gene Collection (MGC).</title>
        <authorList>
            <consortium name="The MGC Project Team"/>
        </authorList>
    </citation>
    <scope>NUCLEOTIDE SEQUENCE [LARGE SCALE MRNA]</scope>
    <source>
        <strain>Czech II</strain>
        <tissue>Mammary tumor</tissue>
    </source>
</reference>
<name>IER2_MOUSE</name>
<organism>
    <name type="scientific">Mus musculus</name>
    <name type="common">Mouse</name>
    <dbReference type="NCBI Taxonomy" id="10090"/>
    <lineage>
        <taxon>Eukaryota</taxon>
        <taxon>Metazoa</taxon>
        <taxon>Chordata</taxon>
        <taxon>Craniata</taxon>
        <taxon>Vertebrata</taxon>
        <taxon>Euteleostomi</taxon>
        <taxon>Mammalia</taxon>
        <taxon>Eutheria</taxon>
        <taxon>Euarchontoglires</taxon>
        <taxon>Glires</taxon>
        <taxon>Rodentia</taxon>
        <taxon>Myomorpha</taxon>
        <taxon>Muroidea</taxon>
        <taxon>Muridae</taxon>
        <taxon>Murinae</taxon>
        <taxon>Mus</taxon>
        <taxon>Mus</taxon>
    </lineage>
</organism>
<evidence type="ECO:0000250" key="1">
    <source>
        <dbReference type="UniProtKB" id="B7SXM5"/>
    </source>
</evidence>
<evidence type="ECO:0000250" key="2">
    <source>
        <dbReference type="UniProtKB" id="Q6P7D3"/>
    </source>
</evidence>
<evidence type="ECO:0000250" key="3">
    <source>
        <dbReference type="UniProtKB" id="Q9BTL4"/>
    </source>
</evidence>
<evidence type="ECO:0000256" key="4">
    <source>
        <dbReference type="SAM" id="MobiDB-lite"/>
    </source>
</evidence>
<evidence type="ECO:0000269" key="5">
    <source>
    </source>
</evidence>
<evidence type="ECO:0000269" key="6">
    <source>
    </source>
</evidence>
<evidence type="ECO:0000305" key="7"/>
<protein>
    <recommendedName>
        <fullName>Immediate early response gene 2 protein</fullName>
    </recommendedName>
    <alternativeName>
        <fullName>CHX1</fullName>
    </alternativeName>
    <alternativeName>
        <fullName>Cycloheximide-induced gene protein</fullName>
    </alternativeName>
    <alternativeName>
        <fullName>Growth factor-inducible immediate early protein</fullName>
    </alternativeName>
    <alternativeName>
        <fullName>Proline-rich-induced protein 92</fullName>
        <shortName>Pip92</shortName>
    </alternativeName>
    <alternativeName>
        <fullName>T-lymphocyte-activated protein</fullName>
    </alternativeName>
</protein>